<evidence type="ECO:0000255" key="1">
    <source>
        <dbReference type="HAMAP-Rule" id="MF_00175"/>
    </source>
</evidence>
<evidence type="ECO:0000255" key="2">
    <source>
        <dbReference type="PROSITE-ProRule" id="PRU01250"/>
    </source>
</evidence>
<proteinExistence type="inferred from homology"/>
<dbReference type="EMBL" id="CP000482">
    <property type="protein sequence ID" value="ABK98804.1"/>
    <property type="molecule type" value="Genomic_DNA"/>
</dbReference>
<dbReference type="RefSeq" id="WP_011735106.1">
    <property type="nucleotide sequence ID" value="NC_008609.1"/>
</dbReference>
<dbReference type="SMR" id="A1AN84"/>
<dbReference type="STRING" id="338966.Ppro_1182"/>
<dbReference type="KEGG" id="ppd:Ppro_1182"/>
<dbReference type="eggNOG" id="COG1219">
    <property type="taxonomic scope" value="Bacteria"/>
</dbReference>
<dbReference type="HOGENOM" id="CLU_014218_8_2_7"/>
<dbReference type="OrthoDB" id="9804062at2"/>
<dbReference type="Proteomes" id="UP000006732">
    <property type="component" value="Chromosome"/>
</dbReference>
<dbReference type="GO" id="GO:0009376">
    <property type="term" value="C:HslUV protease complex"/>
    <property type="evidence" value="ECO:0007669"/>
    <property type="project" value="TreeGrafter"/>
</dbReference>
<dbReference type="GO" id="GO:0005524">
    <property type="term" value="F:ATP binding"/>
    <property type="evidence" value="ECO:0007669"/>
    <property type="project" value="UniProtKB-UniRule"/>
</dbReference>
<dbReference type="GO" id="GO:0016887">
    <property type="term" value="F:ATP hydrolysis activity"/>
    <property type="evidence" value="ECO:0007669"/>
    <property type="project" value="InterPro"/>
</dbReference>
<dbReference type="GO" id="GO:0140662">
    <property type="term" value="F:ATP-dependent protein folding chaperone"/>
    <property type="evidence" value="ECO:0007669"/>
    <property type="project" value="InterPro"/>
</dbReference>
<dbReference type="GO" id="GO:0046983">
    <property type="term" value="F:protein dimerization activity"/>
    <property type="evidence" value="ECO:0007669"/>
    <property type="project" value="InterPro"/>
</dbReference>
<dbReference type="GO" id="GO:0051082">
    <property type="term" value="F:unfolded protein binding"/>
    <property type="evidence" value="ECO:0007669"/>
    <property type="project" value="UniProtKB-UniRule"/>
</dbReference>
<dbReference type="GO" id="GO:0008270">
    <property type="term" value="F:zinc ion binding"/>
    <property type="evidence" value="ECO:0007669"/>
    <property type="project" value="InterPro"/>
</dbReference>
<dbReference type="GO" id="GO:0051301">
    <property type="term" value="P:cell division"/>
    <property type="evidence" value="ECO:0007669"/>
    <property type="project" value="TreeGrafter"/>
</dbReference>
<dbReference type="GO" id="GO:0051603">
    <property type="term" value="P:proteolysis involved in protein catabolic process"/>
    <property type="evidence" value="ECO:0007669"/>
    <property type="project" value="TreeGrafter"/>
</dbReference>
<dbReference type="CDD" id="cd19497">
    <property type="entry name" value="RecA-like_ClpX"/>
    <property type="match status" value="1"/>
</dbReference>
<dbReference type="FunFam" id="1.10.8.60:FF:000002">
    <property type="entry name" value="ATP-dependent Clp protease ATP-binding subunit ClpX"/>
    <property type="match status" value="1"/>
</dbReference>
<dbReference type="FunFam" id="3.40.50.300:FF:000005">
    <property type="entry name" value="ATP-dependent Clp protease ATP-binding subunit ClpX"/>
    <property type="match status" value="1"/>
</dbReference>
<dbReference type="Gene3D" id="1.10.8.60">
    <property type="match status" value="1"/>
</dbReference>
<dbReference type="Gene3D" id="6.20.220.10">
    <property type="entry name" value="ClpX chaperone, C4-type zinc finger domain"/>
    <property type="match status" value="1"/>
</dbReference>
<dbReference type="Gene3D" id="3.40.50.300">
    <property type="entry name" value="P-loop containing nucleotide triphosphate hydrolases"/>
    <property type="match status" value="1"/>
</dbReference>
<dbReference type="HAMAP" id="MF_00175">
    <property type="entry name" value="ClpX"/>
    <property type="match status" value="1"/>
</dbReference>
<dbReference type="InterPro" id="IPR003593">
    <property type="entry name" value="AAA+_ATPase"/>
</dbReference>
<dbReference type="InterPro" id="IPR050052">
    <property type="entry name" value="ATP-dep_Clp_protease_ClpX"/>
</dbReference>
<dbReference type="InterPro" id="IPR003959">
    <property type="entry name" value="ATPase_AAA_core"/>
</dbReference>
<dbReference type="InterPro" id="IPR019489">
    <property type="entry name" value="Clp_ATPase_C"/>
</dbReference>
<dbReference type="InterPro" id="IPR004487">
    <property type="entry name" value="Clp_protease_ATP-bd_su_ClpX"/>
</dbReference>
<dbReference type="InterPro" id="IPR046425">
    <property type="entry name" value="ClpX_bact"/>
</dbReference>
<dbReference type="InterPro" id="IPR027417">
    <property type="entry name" value="P-loop_NTPase"/>
</dbReference>
<dbReference type="InterPro" id="IPR010603">
    <property type="entry name" value="Znf_CppX_C4"/>
</dbReference>
<dbReference type="InterPro" id="IPR038366">
    <property type="entry name" value="Znf_CppX_C4_sf"/>
</dbReference>
<dbReference type="NCBIfam" id="TIGR00382">
    <property type="entry name" value="clpX"/>
    <property type="match status" value="1"/>
</dbReference>
<dbReference type="NCBIfam" id="NF003745">
    <property type="entry name" value="PRK05342.1"/>
    <property type="match status" value="1"/>
</dbReference>
<dbReference type="PANTHER" id="PTHR48102:SF7">
    <property type="entry name" value="ATP-DEPENDENT CLP PROTEASE ATP-BINDING SUBUNIT CLPX-LIKE, MITOCHONDRIAL"/>
    <property type="match status" value="1"/>
</dbReference>
<dbReference type="PANTHER" id="PTHR48102">
    <property type="entry name" value="ATP-DEPENDENT CLP PROTEASE ATP-BINDING SUBUNIT CLPX-LIKE, MITOCHONDRIAL-RELATED"/>
    <property type="match status" value="1"/>
</dbReference>
<dbReference type="Pfam" id="PF07724">
    <property type="entry name" value="AAA_2"/>
    <property type="match status" value="1"/>
</dbReference>
<dbReference type="Pfam" id="PF10431">
    <property type="entry name" value="ClpB_D2-small"/>
    <property type="match status" value="1"/>
</dbReference>
<dbReference type="Pfam" id="PF06689">
    <property type="entry name" value="zf-C4_ClpX"/>
    <property type="match status" value="1"/>
</dbReference>
<dbReference type="SMART" id="SM00382">
    <property type="entry name" value="AAA"/>
    <property type="match status" value="1"/>
</dbReference>
<dbReference type="SMART" id="SM01086">
    <property type="entry name" value="ClpB_D2-small"/>
    <property type="match status" value="1"/>
</dbReference>
<dbReference type="SMART" id="SM00994">
    <property type="entry name" value="zf-C4_ClpX"/>
    <property type="match status" value="1"/>
</dbReference>
<dbReference type="SUPFAM" id="SSF57716">
    <property type="entry name" value="Glucocorticoid receptor-like (DNA-binding domain)"/>
    <property type="match status" value="1"/>
</dbReference>
<dbReference type="SUPFAM" id="SSF52540">
    <property type="entry name" value="P-loop containing nucleoside triphosphate hydrolases"/>
    <property type="match status" value="1"/>
</dbReference>
<dbReference type="PROSITE" id="PS51902">
    <property type="entry name" value="CLPX_ZB"/>
    <property type="match status" value="1"/>
</dbReference>
<feature type="chain" id="PRO_1000024609" description="ATP-dependent Clp protease ATP-binding subunit ClpX">
    <location>
        <begin position="1"/>
        <end position="418"/>
    </location>
</feature>
<feature type="domain" description="ClpX-type ZB" evidence="2">
    <location>
        <begin position="1"/>
        <end position="54"/>
    </location>
</feature>
<feature type="binding site" evidence="2">
    <location>
        <position position="13"/>
    </location>
    <ligand>
        <name>Zn(2+)</name>
        <dbReference type="ChEBI" id="CHEBI:29105"/>
    </ligand>
</feature>
<feature type="binding site" evidence="2">
    <location>
        <position position="16"/>
    </location>
    <ligand>
        <name>Zn(2+)</name>
        <dbReference type="ChEBI" id="CHEBI:29105"/>
    </ligand>
</feature>
<feature type="binding site" evidence="2">
    <location>
        <position position="35"/>
    </location>
    <ligand>
        <name>Zn(2+)</name>
        <dbReference type="ChEBI" id="CHEBI:29105"/>
    </ligand>
</feature>
<feature type="binding site" evidence="2">
    <location>
        <position position="38"/>
    </location>
    <ligand>
        <name>Zn(2+)</name>
        <dbReference type="ChEBI" id="CHEBI:29105"/>
    </ligand>
</feature>
<feature type="binding site" evidence="1">
    <location>
        <begin position="119"/>
        <end position="126"/>
    </location>
    <ligand>
        <name>ATP</name>
        <dbReference type="ChEBI" id="CHEBI:30616"/>
    </ligand>
</feature>
<name>CLPX_PELPD</name>
<protein>
    <recommendedName>
        <fullName evidence="1">ATP-dependent Clp protease ATP-binding subunit ClpX</fullName>
    </recommendedName>
</protein>
<comment type="function">
    <text evidence="1">ATP-dependent specificity component of the Clp protease. It directs the protease to specific substrates. Can perform chaperone functions in the absence of ClpP.</text>
</comment>
<comment type="subunit">
    <text evidence="1">Component of the ClpX-ClpP complex. Forms a hexameric ring that, in the presence of ATP, binds to fourteen ClpP subunits assembled into a disk-like structure with a central cavity, resembling the structure of eukaryotic proteasomes.</text>
</comment>
<comment type="similarity">
    <text evidence="1">Belongs to the ClpX chaperone family.</text>
</comment>
<sequence length="418" mass="46460">MSRRETTQENLTCSFCGKSQEEVKKLIAGPAVYICDECIELCNDIIAEELKMEETLGPDLKKLPKPREIKDVLDEYVIGQEKAKKVLSVAVYNHYKRIETSNKPGDVEMQKSNILLLGPTGSGKTLLAQTLARILKVPFAMADATNLTEAGYVGEDVENIILSLLQAADYDVERAQKGIIYIDEIDKIARKSESPSLTRDVSGEGVQQALLKIIEGTVASIPPKGGRKHPQQEFMKVDTTNILFICGGAFAGLDSVIQQRIGMKSLGFGADVKKRAEKKLGELLLNVTPDDLLKYGYIPEFIGRLPMLATLTELDEDAMVQILKEPKNSLVKQYQKLFELENVRLRFTDGSLVAIAREALKRNTGARGLRSILENSMLDIMYEVPSQPNVKEVVISEEVIYHKEKPIVVYEQQVSDAA</sequence>
<accession>A1AN84</accession>
<keyword id="KW-0067">ATP-binding</keyword>
<keyword id="KW-0143">Chaperone</keyword>
<keyword id="KW-0479">Metal-binding</keyword>
<keyword id="KW-0547">Nucleotide-binding</keyword>
<keyword id="KW-1185">Reference proteome</keyword>
<keyword id="KW-0862">Zinc</keyword>
<organism>
    <name type="scientific">Pelobacter propionicus (strain DSM 2379 / NBRC 103807 / OttBd1)</name>
    <dbReference type="NCBI Taxonomy" id="338966"/>
    <lineage>
        <taxon>Bacteria</taxon>
        <taxon>Pseudomonadati</taxon>
        <taxon>Thermodesulfobacteriota</taxon>
        <taxon>Desulfuromonadia</taxon>
        <taxon>Desulfuromonadales</taxon>
        <taxon>Desulfuromonadaceae</taxon>
        <taxon>Pelobacter</taxon>
    </lineage>
</organism>
<reference key="1">
    <citation type="submission" date="2006-10" db="EMBL/GenBank/DDBJ databases">
        <title>Complete sequence of chromosome of Pelobacter propionicus DSM 2379.</title>
        <authorList>
            <consortium name="US DOE Joint Genome Institute"/>
            <person name="Copeland A."/>
            <person name="Lucas S."/>
            <person name="Lapidus A."/>
            <person name="Barry K."/>
            <person name="Detter J.C."/>
            <person name="Glavina del Rio T."/>
            <person name="Hammon N."/>
            <person name="Israni S."/>
            <person name="Dalin E."/>
            <person name="Tice H."/>
            <person name="Pitluck S."/>
            <person name="Saunders E."/>
            <person name="Brettin T."/>
            <person name="Bruce D."/>
            <person name="Han C."/>
            <person name="Tapia R."/>
            <person name="Schmutz J."/>
            <person name="Larimer F."/>
            <person name="Land M."/>
            <person name="Hauser L."/>
            <person name="Kyrpides N."/>
            <person name="Kim E."/>
            <person name="Lovley D."/>
            <person name="Richardson P."/>
        </authorList>
    </citation>
    <scope>NUCLEOTIDE SEQUENCE [LARGE SCALE GENOMIC DNA]</scope>
    <source>
        <strain>DSM 2379 / NBRC 103807 / OttBd1</strain>
    </source>
</reference>
<gene>
    <name evidence="1" type="primary">clpX</name>
    <name type="ordered locus">Ppro_1182</name>
</gene>